<dbReference type="EMBL" id="AABR03084626">
    <property type="status" value="NOT_ANNOTATED_CDS"/>
    <property type="molecule type" value="Genomic_DNA"/>
</dbReference>
<dbReference type="EMBL" id="AABR03084670">
    <property type="status" value="NOT_ANNOTATED_CDS"/>
    <property type="molecule type" value="Genomic_DNA"/>
</dbReference>
<dbReference type="EMBL" id="AABR03084735">
    <property type="status" value="NOT_ANNOTATED_CDS"/>
    <property type="molecule type" value="Genomic_DNA"/>
</dbReference>
<dbReference type="EMBL" id="AABR03084983">
    <property type="status" value="NOT_ANNOTATED_CDS"/>
    <property type="molecule type" value="Genomic_DNA"/>
</dbReference>
<dbReference type="EMBL" id="AABR03085038">
    <property type="status" value="NOT_ANNOTATED_CDS"/>
    <property type="molecule type" value="Genomic_DNA"/>
</dbReference>
<dbReference type="EMBL" id="AABR03085143">
    <property type="status" value="NOT_ANNOTATED_CDS"/>
    <property type="molecule type" value="Genomic_DNA"/>
</dbReference>
<dbReference type="EMBL" id="AABR03085216">
    <property type="status" value="NOT_ANNOTATED_CDS"/>
    <property type="molecule type" value="Genomic_DNA"/>
</dbReference>
<dbReference type="EMBL" id="AABR03086358">
    <property type="status" value="NOT_ANNOTATED_CDS"/>
    <property type="molecule type" value="Genomic_DNA"/>
</dbReference>
<dbReference type="EMBL" id="AABR03086625">
    <property type="status" value="NOT_ANNOTATED_CDS"/>
    <property type="molecule type" value="Genomic_DNA"/>
</dbReference>
<dbReference type="EMBL" id="BN000871">
    <property type="protein sequence ID" value="CAJ55733.1"/>
    <property type="molecule type" value="mRNA"/>
</dbReference>
<dbReference type="RefSeq" id="NP_001041331.1">
    <property type="nucleotide sequence ID" value="NM_001047866.1"/>
</dbReference>
<dbReference type="SMR" id="Q0V8T3"/>
<dbReference type="FunCoup" id="Q0V8T3">
    <property type="interactions" value="272"/>
</dbReference>
<dbReference type="STRING" id="10116.ENSRNOP00000062287"/>
<dbReference type="GlyCosmos" id="Q0V8T3">
    <property type="glycosylation" value="5 sites, No reported glycans"/>
</dbReference>
<dbReference type="GlyGen" id="Q0V8T3">
    <property type="glycosylation" value="6 sites"/>
</dbReference>
<dbReference type="iPTMnet" id="Q0V8T3"/>
<dbReference type="PhosphoSitePlus" id="Q0V8T3"/>
<dbReference type="PaxDb" id="10116-ENSRNOP00000062287"/>
<dbReference type="GeneID" id="297846"/>
<dbReference type="KEGG" id="rno:297846"/>
<dbReference type="UCSC" id="RGD:1566343">
    <property type="organism name" value="rat"/>
</dbReference>
<dbReference type="AGR" id="RGD:1566343"/>
<dbReference type="CTD" id="620292"/>
<dbReference type="eggNOG" id="KOG3516">
    <property type="taxonomic scope" value="Eukaryota"/>
</dbReference>
<dbReference type="InParanoid" id="Q0V8T3"/>
<dbReference type="OrthoDB" id="26719at2759"/>
<dbReference type="PhylomeDB" id="Q0V8T3"/>
<dbReference type="PRO" id="PR:Q0V8T3"/>
<dbReference type="Proteomes" id="UP000002494">
    <property type="component" value="Unplaced"/>
</dbReference>
<dbReference type="GO" id="GO:0030054">
    <property type="term" value="C:cell junction"/>
    <property type="evidence" value="ECO:0007669"/>
    <property type="project" value="UniProtKB-ARBA"/>
</dbReference>
<dbReference type="GO" id="GO:0016020">
    <property type="term" value="C:membrane"/>
    <property type="evidence" value="ECO:0007669"/>
    <property type="project" value="UniProtKB-SubCell"/>
</dbReference>
<dbReference type="GO" id="GO:0007155">
    <property type="term" value="P:cell adhesion"/>
    <property type="evidence" value="ECO:0007669"/>
    <property type="project" value="UniProtKB-KW"/>
</dbReference>
<dbReference type="CDD" id="cd00054">
    <property type="entry name" value="EGF_CA"/>
    <property type="match status" value="2"/>
</dbReference>
<dbReference type="CDD" id="cd00057">
    <property type="entry name" value="FA58C"/>
    <property type="match status" value="1"/>
</dbReference>
<dbReference type="CDD" id="cd00110">
    <property type="entry name" value="LamG"/>
    <property type="match status" value="4"/>
</dbReference>
<dbReference type="FunFam" id="2.60.120.260:FF:000016">
    <property type="entry name" value="Contactin-associated protein-like 4 isoform 1"/>
    <property type="match status" value="1"/>
</dbReference>
<dbReference type="FunFam" id="2.60.120.200:FF:000026">
    <property type="entry name" value="contactin-associated protein-like 4 isoform X1"/>
    <property type="match status" value="1"/>
</dbReference>
<dbReference type="Gene3D" id="2.60.120.1000">
    <property type="match status" value="1"/>
</dbReference>
<dbReference type="Gene3D" id="2.60.120.200">
    <property type="match status" value="4"/>
</dbReference>
<dbReference type="Gene3D" id="2.60.120.260">
    <property type="entry name" value="Galactose-binding domain-like"/>
    <property type="match status" value="1"/>
</dbReference>
<dbReference type="Gene3D" id="2.10.25.10">
    <property type="entry name" value="Laminin"/>
    <property type="match status" value="2"/>
</dbReference>
<dbReference type="InterPro" id="IPR013320">
    <property type="entry name" value="ConA-like_dom_sf"/>
</dbReference>
<dbReference type="InterPro" id="IPR000742">
    <property type="entry name" value="EGF-like_dom"/>
</dbReference>
<dbReference type="InterPro" id="IPR000421">
    <property type="entry name" value="FA58C"/>
</dbReference>
<dbReference type="InterPro" id="IPR036056">
    <property type="entry name" value="Fibrinogen-like_C"/>
</dbReference>
<dbReference type="InterPro" id="IPR002181">
    <property type="entry name" value="Fibrinogen_a/b/g_C_dom"/>
</dbReference>
<dbReference type="InterPro" id="IPR008979">
    <property type="entry name" value="Galactose-bd-like_sf"/>
</dbReference>
<dbReference type="InterPro" id="IPR001791">
    <property type="entry name" value="Laminin_G"/>
</dbReference>
<dbReference type="InterPro" id="IPR050372">
    <property type="entry name" value="Neurexin-related_CASP"/>
</dbReference>
<dbReference type="PANTHER" id="PTHR15036:SF46">
    <property type="entry name" value="CONTACTIN-ASSOCIATED PROTEIN-LIKE 5"/>
    <property type="match status" value="1"/>
</dbReference>
<dbReference type="PANTHER" id="PTHR15036">
    <property type="entry name" value="PIKACHURIN-LIKE PROTEIN"/>
    <property type="match status" value="1"/>
</dbReference>
<dbReference type="Pfam" id="PF00754">
    <property type="entry name" value="F5_F8_type_C"/>
    <property type="match status" value="1"/>
</dbReference>
<dbReference type="Pfam" id="PF02210">
    <property type="entry name" value="Laminin_G_2"/>
    <property type="match status" value="4"/>
</dbReference>
<dbReference type="SMART" id="SM00181">
    <property type="entry name" value="EGF"/>
    <property type="match status" value="2"/>
</dbReference>
<dbReference type="SMART" id="SM00231">
    <property type="entry name" value="FA58C"/>
    <property type="match status" value="1"/>
</dbReference>
<dbReference type="SMART" id="SM00282">
    <property type="entry name" value="LamG"/>
    <property type="match status" value="4"/>
</dbReference>
<dbReference type="SUPFAM" id="SSF49899">
    <property type="entry name" value="Concanavalin A-like lectins/glucanases"/>
    <property type="match status" value="4"/>
</dbReference>
<dbReference type="SUPFAM" id="SSF57196">
    <property type="entry name" value="EGF/Laminin"/>
    <property type="match status" value="1"/>
</dbReference>
<dbReference type="SUPFAM" id="SSF56496">
    <property type="entry name" value="Fibrinogen C-terminal domain-like"/>
    <property type="match status" value="1"/>
</dbReference>
<dbReference type="SUPFAM" id="SSF49785">
    <property type="entry name" value="Galactose-binding domain-like"/>
    <property type="match status" value="1"/>
</dbReference>
<dbReference type="PROSITE" id="PS50026">
    <property type="entry name" value="EGF_3"/>
    <property type="match status" value="2"/>
</dbReference>
<dbReference type="PROSITE" id="PS01285">
    <property type="entry name" value="FA58C_1"/>
    <property type="match status" value="1"/>
</dbReference>
<dbReference type="PROSITE" id="PS01286">
    <property type="entry name" value="FA58C_2"/>
    <property type="match status" value="1"/>
</dbReference>
<dbReference type="PROSITE" id="PS50022">
    <property type="entry name" value="FA58C_3"/>
    <property type="match status" value="1"/>
</dbReference>
<dbReference type="PROSITE" id="PS51406">
    <property type="entry name" value="FIBRINOGEN_C_2"/>
    <property type="match status" value="1"/>
</dbReference>
<dbReference type="PROSITE" id="PS50025">
    <property type="entry name" value="LAM_G_DOMAIN"/>
    <property type="match status" value="4"/>
</dbReference>
<keyword id="KW-0130">Cell adhesion</keyword>
<keyword id="KW-1015">Disulfide bond</keyword>
<keyword id="KW-0245">EGF-like domain</keyword>
<keyword id="KW-0325">Glycoprotein</keyword>
<keyword id="KW-0472">Membrane</keyword>
<keyword id="KW-1185">Reference proteome</keyword>
<keyword id="KW-0677">Repeat</keyword>
<keyword id="KW-0732">Signal</keyword>
<keyword id="KW-0812">Transmembrane</keyword>
<keyword id="KW-1133">Transmembrane helix</keyword>
<sequence>MNSVRRLNSILTLVLSGLWHLGLTATNYNCDEPLASFLSPLAFFSSSDLNGRFSPPQLNWRIGSGGWSPAVSNAHQWLQIDLGNRVEITAVATQGRYGSTDWVTSYRLMFSDTGHNWQQYKQKDSIWTFVGNTNADGVVYHKLLHSMRARFVRFVPLEWNSNGKIGMRVEVYGCSYKSDIVGFDGQSTLLYRFNQKTMSTLKDVISLKFKSMQGDGVLFHGEGQRGDHITLELQKGRLALYLNIDGSKARLSIIAPLAILGSLLDDQHWHSVLLERVGKQANFTVDRNTQHFQIKGETDALDIDYELSFGGIPVPSKPGTFLKKNFHGCIENVYYNGVNIIDLAKRRKHQIYSGNVTFSCSEPEIVPITFVNSRSSYLLLPGIPQIHGLSVSFHFRTWNEDGLLLSTELSEGSGTLLLILDGGSLRLLIKKVARHGTEIITGSSLNDGLWHSVSINARRNRVTLTLDNDAASPALDTSQLQIYSGNSYYFGGCPDNLTDSQCLNPIKAFQGCMRLIFIDNQPKDLISVQQGSMGNFSDLHIDLCSIKDRCLPNYCEHGGHCAQNWTTFYCNCSDTGYTGATCHDSVYEQSCEVYRHKGHTAGFFYVDSDGSGPLGPLQVYCNITEDKIWMTVQHNNTELTWVQISNAEKAYAMTFNYGGSMEQLEALIDGSEHCEQEVTYYCRRSHLLKTPDGAPFTWWIGRSNKRHNYWEGSVPRVQQCRCVHKENCLDIRSFCNCDADIGEWAKETGFLSFKDHLPVTQIITTDTNRSKSEAAWKIGPLRCYGDRHFWNAVSFTTEASYLYFPTFHAEFSADISFFFKTTALSGVFLENLGIKDFLRLEMSSPSEITFTIDVGNGPVELLIQSPYPLNDNQWHYIRAERNLKETSLQVDNLPQSMREASEEAYFRLHLTSQLFVGGTSSRQKGFLGCMRSLHLNGQNTDLIERAKLMSGVTPGCLGHCSSYGSNCLNGGKCVEKQSGYSCDCTNSPNEGPFCQKEISALFNSGTSVTYLFQEPYLVIKNTSLLSSPIYADTAPSKETIMLNFLTTQAPTILLYLNFSSQNFLAILLSRNGSLQICFRLSKIESHVYTMNTENLANGRVHQVKINKDGPELSIQMDQQLFTYNFSPKVEFWTLKSLVLGKVTETLGLDPEVAKVNILGFVGCLSSVQYNHIAPLKAALRHSGIAPVTVQGTLTESGCDSTLDSDVNAVTTVHSSLDPIGKRDEREPLTDTVQSDSAVIGGIIALVTFVTFCVIGIMIHFLYLHKQSHCTNQTKEKEYSENLSNSFRNAIDLQNTASECKREYFI</sequence>
<comment type="function">
    <text>May play a role in the correct development and proper functioning of the peripheral and central nervous system and be involved in cell adhesion and intercellular communication.</text>
</comment>
<comment type="subcellular location">
    <subcellularLocation>
        <location evidence="7">Membrane</location>
        <topology evidence="7">Single-pass type I membrane protein</topology>
    </subcellularLocation>
</comment>
<comment type="similarity">
    <text evidence="7">Belongs to the neurexin family.</text>
</comment>
<gene>
    <name type="primary">Cntnap5d</name>
    <name type="synonym">Caspr5-4</name>
</gene>
<organism>
    <name type="scientific">Rattus norvegicus</name>
    <name type="common">Rat</name>
    <dbReference type="NCBI Taxonomy" id="10116"/>
    <lineage>
        <taxon>Eukaryota</taxon>
        <taxon>Metazoa</taxon>
        <taxon>Chordata</taxon>
        <taxon>Craniata</taxon>
        <taxon>Vertebrata</taxon>
        <taxon>Euteleostomi</taxon>
        <taxon>Mammalia</taxon>
        <taxon>Eutheria</taxon>
        <taxon>Euarchontoglires</taxon>
        <taxon>Glires</taxon>
        <taxon>Rodentia</taxon>
        <taxon>Myomorpha</taxon>
        <taxon>Muroidea</taxon>
        <taxon>Muridae</taxon>
        <taxon>Murinae</taxon>
        <taxon>Rattus</taxon>
    </lineage>
</organism>
<name>CTP5D_RAT</name>
<proteinExistence type="evidence at transcript level"/>
<evidence type="ECO:0000250" key="1"/>
<evidence type="ECO:0000255" key="2"/>
<evidence type="ECO:0000255" key="3">
    <source>
        <dbReference type="PROSITE-ProRule" id="PRU00076"/>
    </source>
</evidence>
<evidence type="ECO:0000255" key="4">
    <source>
        <dbReference type="PROSITE-ProRule" id="PRU00081"/>
    </source>
</evidence>
<evidence type="ECO:0000255" key="5">
    <source>
        <dbReference type="PROSITE-ProRule" id="PRU00122"/>
    </source>
</evidence>
<evidence type="ECO:0000255" key="6">
    <source>
        <dbReference type="PROSITE-ProRule" id="PRU00739"/>
    </source>
</evidence>
<evidence type="ECO:0000305" key="7"/>
<feature type="signal peptide" evidence="2">
    <location>
        <begin position="1"/>
        <end position="24"/>
    </location>
</feature>
<feature type="chain" id="PRO_0000317384" description="Contactin-associated protein like 5-4">
    <location>
        <begin position="25"/>
        <end position="1305"/>
    </location>
</feature>
<feature type="topological domain" description="Extracellular" evidence="2">
    <location>
        <begin position="25"/>
        <end position="1237"/>
    </location>
</feature>
<feature type="transmembrane region" description="Helical" evidence="2">
    <location>
        <begin position="1238"/>
        <end position="1258"/>
    </location>
</feature>
<feature type="topological domain" description="Cytoplasmic" evidence="2">
    <location>
        <begin position="1259"/>
        <end position="1305"/>
    </location>
</feature>
<feature type="domain" description="F5/8 type C" evidence="4">
    <location>
        <begin position="30"/>
        <end position="174"/>
    </location>
</feature>
<feature type="domain" description="Laminin G-like 1" evidence="5">
    <location>
        <begin position="180"/>
        <end position="360"/>
    </location>
</feature>
<feature type="domain" description="Laminin G-like 2" evidence="5">
    <location>
        <begin position="367"/>
        <end position="544"/>
    </location>
</feature>
<feature type="domain" description="EGF-like 1" evidence="3">
    <location>
        <begin position="546"/>
        <end position="583"/>
    </location>
</feature>
<feature type="domain" description="Fibrinogen C-terminal" evidence="6">
    <location>
        <begin position="584"/>
        <end position="790"/>
    </location>
</feature>
<feature type="domain" description="Laminin G-like 3" evidence="5">
    <location>
        <begin position="791"/>
        <end position="956"/>
    </location>
</feature>
<feature type="domain" description="EGF-like 2" evidence="3">
    <location>
        <begin position="957"/>
        <end position="995"/>
    </location>
</feature>
<feature type="domain" description="Laminin G-like 4" evidence="5">
    <location>
        <begin position="1014"/>
        <end position="1198"/>
    </location>
</feature>
<feature type="glycosylation site" description="N-linked (GlcNAc...) asparagine" evidence="2">
    <location>
        <position position="282"/>
    </location>
</feature>
<feature type="glycosylation site" description="N-linked (GlcNAc...) asparagine" evidence="2">
    <location>
        <position position="496"/>
    </location>
</feature>
<feature type="glycosylation site" description="N-linked (GlcNAc...) asparagine" evidence="2">
    <location>
        <position position="571"/>
    </location>
</feature>
<feature type="glycosylation site" description="N-linked (GlcNAc...) asparagine" evidence="2">
    <location>
        <position position="622"/>
    </location>
</feature>
<feature type="glycosylation site" description="N-linked (GlcNAc...) asparagine" evidence="2">
    <location>
        <position position="1057"/>
    </location>
</feature>
<feature type="disulfide bond" evidence="1">
    <location>
        <begin position="30"/>
        <end position="174"/>
    </location>
</feature>
<feature type="disulfide bond" evidence="1">
    <location>
        <begin position="329"/>
        <end position="360"/>
    </location>
</feature>
<feature type="disulfide bond" evidence="1">
    <location>
        <begin position="512"/>
        <end position="544"/>
    </location>
</feature>
<feature type="disulfide bond" evidence="1">
    <location>
        <begin position="550"/>
        <end position="561"/>
    </location>
</feature>
<feature type="disulfide bond" evidence="1">
    <location>
        <begin position="555"/>
        <end position="570"/>
    </location>
</feature>
<feature type="disulfide bond" evidence="1">
    <location>
        <begin position="572"/>
        <end position="582"/>
    </location>
</feature>
<feature type="disulfide bond" evidence="1">
    <location>
        <begin position="929"/>
        <end position="956"/>
    </location>
</feature>
<feature type="disulfide bond" evidence="1">
    <location>
        <begin position="960"/>
        <end position="973"/>
    </location>
</feature>
<feature type="disulfide bond" evidence="1">
    <location>
        <begin position="967"/>
        <end position="982"/>
    </location>
</feature>
<feature type="disulfide bond" evidence="1">
    <location>
        <begin position="984"/>
        <end position="994"/>
    </location>
</feature>
<feature type="disulfide bond" evidence="1">
    <location>
        <begin position="1163"/>
        <end position="1198"/>
    </location>
</feature>
<protein>
    <recommendedName>
        <fullName>Contactin-associated protein like 5-4</fullName>
    </recommendedName>
    <alternativeName>
        <fullName>Cell recognition molecule Caspr5-4</fullName>
    </alternativeName>
    <alternativeName>
        <fullName>Cell recognition molecule Caspr5d</fullName>
    </alternativeName>
    <alternativeName>
        <fullName>Contactin-associated protein-like 5d</fullName>
    </alternativeName>
</protein>
<accession>Q0V8T3</accession>
<reference key="1">
    <citation type="journal article" date="2004" name="Nature">
        <title>Genome sequence of the Brown Norway rat yields insights into mammalian evolution.</title>
        <authorList>
            <person name="Gibbs R.A."/>
            <person name="Weinstock G.M."/>
            <person name="Metzker M.L."/>
            <person name="Muzny D.M."/>
            <person name="Sodergren E.J."/>
            <person name="Scherer S."/>
            <person name="Scott G."/>
            <person name="Steffen D."/>
            <person name="Worley K.C."/>
            <person name="Burch P.E."/>
            <person name="Okwuonu G."/>
            <person name="Hines S."/>
            <person name="Lewis L."/>
            <person name="Deramo C."/>
            <person name="Delgado O."/>
            <person name="Dugan-Rocha S."/>
            <person name="Miner G."/>
            <person name="Morgan M."/>
            <person name="Hawes A."/>
            <person name="Gill R."/>
            <person name="Holt R.A."/>
            <person name="Adams M.D."/>
            <person name="Amanatides P.G."/>
            <person name="Baden-Tillson H."/>
            <person name="Barnstead M."/>
            <person name="Chin S."/>
            <person name="Evans C.A."/>
            <person name="Ferriera S."/>
            <person name="Fosler C."/>
            <person name="Glodek A."/>
            <person name="Gu Z."/>
            <person name="Jennings D."/>
            <person name="Kraft C.L."/>
            <person name="Nguyen T."/>
            <person name="Pfannkoch C.M."/>
            <person name="Sitter C."/>
            <person name="Sutton G.G."/>
            <person name="Venter J.C."/>
            <person name="Woodage T."/>
            <person name="Smith D."/>
            <person name="Lee H.-M."/>
            <person name="Gustafson E."/>
            <person name="Cahill P."/>
            <person name="Kana A."/>
            <person name="Doucette-Stamm L."/>
            <person name="Weinstock K."/>
            <person name="Fechtel K."/>
            <person name="Weiss R.B."/>
            <person name="Dunn D.M."/>
            <person name="Green E.D."/>
            <person name="Blakesley R.W."/>
            <person name="Bouffard G.G."/>
            <person name="De Jong P.J."/>
            <person name="Osoegawa K."/>
            <person name="Zhu B."/>
            <person name="Marra M."/>
            <person name="Schein J."/>
            <person name="Bosdet I."/>
            <person name="Fjell C."/>
            <person name="Jones S."/>
            <person name="Krzywinski M."/>
            <person name="Mathewson C."/>
            <person name="Siddiqui A."/>
            <person name="Wye N."/>
            <person name="McPherson J."/>
            <person name="Zhao S."/>
            <person name="Fraser C.M."/>
            <person name="Shetty J."/>
            <person name="Shatsman S."/>
            <person name="Geer K."/>
            <person name="Chen Y."/>
            <person name="Abramzon S."/>
            <person name="Nierman W.C."/>
            <person name="Havlak P.H."/>
            <person name="Chen R."/>
            <person name="Durbin K.J."/>
            <person name="Egan A."/>
            <person name="Ren Y."/>
            <person name="Song X.-Z."/>
            <person name="Li B."/>
            <person name="Liu Y."/>
            <person name="Qin X."/>
            <person name="Cawley S."/>
            <person name="Cooney A.J."/>
            <person name="D'Souza L.M."/>
            <person name="Martin K."/>
            <person name="Wu J.Q."/>
            <person name="Gonzalez-Garay M.L."/>
            <person name="Jackson A.R."/>
            <person name="Kalafus K.J."/>
            <person name="McLeod M.P."/>
            <person name="Milosavljevic A."/>
            <person name="Virk D."/>
            <person name="Volkov A."/>
            <person name="Wheeler D.A."/>
            <person name="Zhang Z."/>
            <person name="Bailey J.A."/>
            <person name="Eichler E.E."/>
            <person name="Tuzun E."/>
            <person name="Birney E."/>
            <person name="Mongin E."/>
            <person name="Ureta-Vidal A."/>
            <person name="Woodwark C."/>
            <person name="Zdobnov E."/>
            <person name="Bork P."/>
            <person name="Suyama M."/>
            <person name="Torrents D."/>
            <person name="Alexandersson M."/>
            <person name="Trask B.J."/>
            <person name="Young J.M."/>
            <person name="Huang H."/>
            <person name="Wang H."/>
            <person name="Xing H."/>
            <person name="Daniels S."/>
            <person name="Gietzen D."/>
            <person name="Schmidt J."/>
            <person name="Stevens K."/>
            <person name="Vitt U."/>
            <person name="Wingrove J."/>
            <person name="Camara F."/>
            <person name="Mar Alba M."/>
            <person name="Abril J.F."/>
            <person name="Guigo R."/>
            <person name="Smit A."/>
            <person name="Dubchak I."/>
            <person name="Rubin E.M."/>
            <person name="Couronne O."/>
            <person name="Poliakov A."/>
            <person name="Huebner N."/>
            <person name="Ganten D."/>
            <person name="Goesele C."/>
            <person name="Hummel O."/>
            <person name="Kreitler T."/>
            <person name="Lee Y.-A."/>
            <person name="Monti J."/>
            <person name="Schulz H."/>
            <person name="Zimdahl H."/>
            <person name="Himmelbauer H."/>
            <person name="Lehrach H."/>
            <person name="Jacob H.J."/>
            <person name="Bromberg S."/>
            <person name="Gullings-Handley J."/>
            <person name="Jensen-Seaman M.I."/>
            <person name="Kwitek A.E."/>
            <person name="Lazar J."/>
            <person name="Pasko D."/>
            <person name="Tonellato P.J."/>
            <person name="Twigger S."/>
            <person name="Ponting C.P."/>
            <person name="Duarte J.M."/>
            <person name="Rice S."/>
            <person name="Goodstadt L."/>
            <person name="Beatson S.A."/>
            <person name="Emes R.D."/>
            <person name="Winter E.E."/>
            <person name="Webber C."/>
            <person name="Brandt P."/>
            <person name="Nyakatura G."/>
            <person name="Adetobi M."/>
            <person name="Chiaromonte F."/>
            <person name="Elnitski L."/>
            <person name="Eswara P."/>
            <person name="Hardison R.C."/>
            <person name="Hou M."/>
            <person name="Kolbe D."/>
            <person name="Makova K."/>
            <person name="Miller W."/>
            <person name="Nekrutenko A."/>
            <person name="Riemer C."/>
            <person name="Schwartz S."/>
            <person name="Taylor J."/>
            <person name="Yang S."/>
            <person name="Zhang Y."/>
            <person name="Lindpaintner K."/>
            <person name="Andrews T.D."/>
            <person name="Caccamo M."/>
            <person name="Clamp M."/>
            <person name="Clarke L."/>
            <person name="Curwen V."/>
            <person name="Durbin R.M."/>
            <person name="Eyras E."/>
            <person name="Searle S.M."/>
            <person name="Cooper G.M."/>
            <person name="Batzoglou S."/>
            <person name="Brudno M."/>
            <person name="Sidow A."/>
            <person name="Stone E.A."/>
            <person name="Payseur B.A."/>
            <person name="Bourque G."/>
            <person name="Lopez-Otin C."/>
            <person name="Puente X.S."/>
            <person name="Chakrabarti K."/>
            <person name="Chatterji S."/>
            <person name="Dewey C."/>
            <person name="Pachter L."/>
            <person name="Bray N."/>
            <person name="Yap V.B."/>
            <person name="Caspi A."/>
            <person name="Tesler G."/>
            <person name="Pevzner P.A."/>
            <person name="Haussler D."/>
            <person name="Roskin K.M."/>
            <person name="Baertsch R."/>
            <person name="Clawson H."/>
            <person name="Furey T.S."/>
            <person name="Hinrichs A.S."/>
            <person name="Karolchik D."/>
            <person name="Kent W.J."/>
            <person name="Rosenbloom K.R."/>
            <person name="Trumbower H."/>
            <person name="Weirauch M."/>
            <person name="Cooper D.N."/>
            <person name="Stenson P.D."/>
            <person name="Ma B."/>
            <person name="Brent M."/>
            <person name="Arumugam M."/>
            <person name="Shteynberg D."/>
            <person name="Copley R.R."/>
            <person name="Taylor M.S."/>
            <person name="Riethman H."/>
            <person name="Mudunuri U."/>
            <person name="Peterson J."/>
            <person name="Guyer M."/>
            <person name="Felsenfeld A."/>
            <person name="Old S."/>
            <person name="Mockrin S."/>
            <person name="Collins F.S."/>
        </authorList>
    </citation>
    <scope>NUCLEOTIDE SEQUENCE [LARGE SCALE GENOMIC DNA]</scope>
    <source>
        <strain>Brown Norway</strain>
    </source>
</reference>
<reference key="2">
    <citation type="journal article" date="2006" name="Mamm. Genome">
        <title>New members of the neurexin superfamily: multiple rodent homologues of the human CASPR5 gene.</title>
        <authorList>
            <person name="Traut W."/>
            <person name="Weichenhan D."/>
            <person name="Himmelbauer H."/>
            <person name="Winking H."/>
        </authorList>
    </citation>
    <scope>IDENTIFICATION</scope>
</reference>